<proteinExistence type="evidence at protein level"/>
<dbReference type="EC" id="3.4.17.-" evidence="1"/>
<dbReference type="EMBL" id="AM270317">
    <property type="protein sequence ID" value="CAK41945.1"/>
    <property type="molecule type" value="Genomic_DNA"/>
</dbReference>
<dbReference type="PDB" id="4C5Y">
    <property type="method" value="X-ray"/>
    <property type="resolution" value="3.00 A"/>
    <property type="chains" value="A/B=43-480"/>
</dbReference>
<dbReference type="PDB" id="4C60">
    <property type="method" value="X-ray"/>
    <property type="resolution" value="2.50 A"/>
    <property type="chains" value="A/B/C/D/E/F/G/H=43-480"/>
</dbReference>
<dbReference type="PDB" id="4C65">
    <property type="method" value="X-ray"/>
    <property type="resolution" value="2.20 A"/>
    <property type="chains" value="A/B/C/D/E/F/G/H=43-480"/>
</dbReference>
<dbReference type="PDBsum" id="4C5Y"/>
<dbReference type="PDBsum" id="4C60"/>
<dbReference type="PDBsum" id="4C65"/>
<dbReference type="SMR" id="A2R2V4"/>
<dbReference type="EnsemblFungi" id="CAK41945">
    <property type="protein sequence ID" value="CAK41945"/>
    <property type="gene ID" value="An14g02080"/>
</dbReference>
<dbReference type="VEuPathDB" id="FungiDB:An14g02080"/>
<dbReference type="HOGENOM" id="CLU_023620_2_1_1"/>
<dbReference type="EvolutionaryTrace" id="A2R2V4"/>
<dbReference type="Proteomes" id="UP000006706">
    <property type="component" value="Chromosome 1R"/>
</dbReference>
<dbReference type="GO" id="GO:0005576">
    <property type="term" value="C:extracellular region"/>
    <property type="evidence" value="ECO:0000314"/>
    <property type="project" value="UniProt"/>
</dbReference>
<dbReference type="GO" id="GO:0004180">
    <property type="term" value="F:carboxypeptidase activity"/>
    <property type="evidence" value="ECO:0000314"/>
    <property type="project" value="UniProt"/>
</dbReference>
<dbReference type="GO" id="GO:0016810">
    <property type="term" value="F:hydrolase activity, acting on carbon-nitrogen (but not peptide) bonds"/>
    <property type="evidence" value="ECO:0007669"/>
    <property type="project" value="InterPro"/>
</dbReference>
<dbReference type="GO" id="GO:0046872">
    <property type="term" value="F:metal ion binding"/>
    <property type="evidence" value="ECO:0007669"/>
    <property type="project" value="UniProtKB-KW"/>
</dbReference>
<dbReference type="GO" id="GO:0008237">
    <property type="term" value="F:metallopeptidase activity"/>
    <property type="evidence" value="ECO:0007669"/>
    <property type="project" value="UniProtKB-KW"/>
</dbReference>
<dbReference type="GO" id="GO:1900817">
    <property type="term" value="P:ochratoxin A catabolic process"/>
    <property type="evidence" value="ECO:0000314"/>
    <property type="project" value="CACAO"/>
</dbReference>
<dbReference type="GO" id="GO:0006508">
    <property type="term" value="P:proteolysis"/>
    <property type="evidence" value="ECO:0007669"/>
    <property type="project" value="UniProtKB-KW"/>
</dbReference>
<dbReference type="CDD" id="cd01299">
    <property type="entry name" value="Met_dep_hydrolase_A"/>
    <property type="match status" value="1"/>
</dbReference>
<dbReference type="FunFam" id="3.20.20.140:FF:000068">
    <property type="entry name" value="Amidohydrolase"/>
    <property type="match status" value="1"/>
</dbReference>
<dbReference type="Gene3D" id="3.20.20.140">
    <property type="entry name" value="Metal-dependent hydrolases"/>
    <property type="match status" value="1"/>
</dbReference>
<dbReference type="InterPro" id="IPR006680">
    <property type="entry name" value="Amidohydro-rel"/>
</dbReference>
<dbReference type="InterPro" id="IPR011059">
    <property type="entry name" value="Metal-dep_hydrolase_composite"/>
</dbReference>
<dbReference type="InterPro" id="IPR032466">
    <property type="entry name" value="Metal_Hydrolase"/>
</dbReference>
<dbReference type="InterPro" id="IPR051781">
    <property type="entry name" value="Metallo-dep_Hydrolase"/>
</dbReference>
<dbReference type="PANTHER" id="PTHR43135">
    <property type="entry name" value="ALPHA-D-RIBOSE 1-METHYLPHOSPHONATE 5-TRIPHOSPHATE DIPHOSPHATASE"/>
    <property type="match status" value="1"/>
</dbReference>
<dbReference type="PANTHER" id="PTHR43135:SF3">
    <property type="entry name" value="ALPHA-D-RIBOSE 1-METHYLPHOSPHONATE 5-TRIPHOSPHATE DIPHOSPHATASE"/>
    <property type="match status" value="1"/>
</dbReference>
<dbReference type="Pfam" id="PF01979">
    <property type="entry name" value="Amidohydro_1"/>
    <property type="match status" value="1"/>
</dbReference>
<dbReference type="SUPFAM" id="SSF51338">
    <property type="entry name" value="Composite domain of metallo-dependent hydrolases"/>
    <property type="match status" value="2"/>
</dbReference>
<dbReference type="SUPFAM" id="SSF51556">
    <property type="entry name" value="Metallo-dependent hydrolases"/>
    <property type="match status" value="1"/>
</dbReference>
<reference key="1">
    <citation type="journal article" date="2007" name="Nat. Biotechnol.">
        <title>Genome sequencing and analysis of the versatile cell factory Aspergillus niger CBS 513.88.</title>
        <authorList>
            <person name="Pel H.J."/>
            <person name="de Winde J.H."/>
            <person name="Archer D.B."/>
            <person name="Dyer P.S."/>
            <person name="Hofmann G."/>
            <person name="Schaap P.J."/>
            <person name="Turner G."/>
            <person name="de Vries R.P."/>
            <person name="Albang R."/>
            <person name="Albermann K."/>
            <person name="Andersen M.R."/>
            <person name="Bendtsen J.D."/>
            <person name="Benen J.A.E."/>
            <person name="van den Berg M."/>
            <person name="Breestraat S."/>
            <person name="Caddick M.X."/>
            <person name="Contreras R."/>
            <person name="Cornell M."/>
            <person name="Coutinho P.M."/>
            <person name="Danchin E.G.J."/>
            <person name="Debets A.J.M."/>
            <person name="Dekker P."/>
            <person name="van Dijck P.W.M."/>
            <person name="van Dijk A."/>
            <person name="Dijkhuizen L."/>
            <person name="Driessen A.J.M."/>
            <person name="d'Enfert C."/>
            <person name="Geysens S."/>
            <person name="Goosen C."/>
            <person name="Groot G.S.P."/>
            <person name="de Groot P.W.J."/>
            <person name="Guillemette T."/>
            <person name="Henrissat B."/>
            <person name="Herweijer M."/>
            <person name="van den Hombergh J.P.T.W."/>
            <person name="van den Hondel C.A.M.J.J."/>
            <person name="van der Heijden R.T.J.M."/>
            <person name="van der Kaaij R.M."/>
            <person name="Klis F.M."/>
            <person name="Kools H.J."/>
            <person name="Kubicek C.P."/>
            <person name="van Kuyk P.A."/>
            <person name="Lauber J."/>
            <person name="Lu X."/>
            <person name="van der Maarel M.J.E.C."/>
            <person name="Meulenberg R."/>
            <person name="Menke H."/>
            <person name="Mortimer M.A."/>
            <person name="Nielsen J."/>
            <person name="Oliver S.G."/>
            <person name="Olsthoorn M."/>
            <person name="Pal K."/>
            <person name="van Peij N.N.M.E."/>
            <person name="Ram A.F.J."/>
            <person name="Rinas U."/>
            <person name="Roubos J.A."/>
            <person name="Sagt C.M.J."/>
            <person name="Schmoll M."/>
            <person name="Sun J."/>
            <person name="Ussery D."/>
            <person name="Varga J."/>
            <person name="Vervecken W."/>
            <person name="van de Vondervoort P.J.J."/>
            <person name="Wedler H."/>
            <person name="Woesten H.A.B."/>
            <person name="Zeng A.-P."/>
            <person name="van Ooyen A.J.J."/>
            <person name="Visser J."/>
            <person name="Stam H."/>
        </authorList>
    </citation>
    <scope>NUCLEOTIDE SEQUENCE [LARGE SCALE GENOMIC DNA]</scope>
    <source>
        <strain>ATCC MYA-4892 / CBS 513.88 / FGSC A1513</strain>
    </source>
</reference>
<reference key="2">
    <citation type="journal article" date="2021" name="J. Biotechnol.">
        <title>Engineering a carboxypeptidase from Aspergillus niger M00988 by mutation to increase its ability in high Fischer ratio oligopeptide preparation.</title>
        <authorList>
            <person name="Xiong K."/>
            <person name="Liu J."/>
            <person name="Wang X."/>
            <person name="Sun B."/>
            <person name="Zhang Y."/>
            <person name="Zhao Z."/>
            <person name="Pei P."/>
            <person name="Li X."/>
        </authorList>
    </citation>
    <scope>FUNCTION</scope>
    <scope>CATALYTIC ACTIVITY</scope>
    <scope>MUTAGENESIS OF SER-135; TYR-160 AND TYR-206</scope>
</reference>
<reference key="3">
    <citation type="journal article" date="2014" name="Biochem. J.">
        <title>Structural and functional characterization of ochratoxinase, a novel mycotoxin-degrading enzyme.</title>
        <authorList>
            <person name="Dobritzsch D."/>
            <person name="Wang H."/>
            <person name="Schneider G."/>
            <person name="Yu S."/>
        </authorList>
    </citation>
    <scope>X-RAY CRYSTALLOGRAPHY (2.20 ANGSTROMS) OF 43-480 IN COMPLEX WITH ZINC</scope>
    <scope>FUNCTION</scope>
    <scope>SUBCELLULAR LOCATION</scope>
    <scope>CATALYTIC ACTIVITY</scope>
    <scope>BIOPHYSICOCHEMICAL PROPERTIES</scope>
    <scope>SUBUNIT</scope>
    <scope>DOMAIN</scope>
    <scope>COFACTOR</scope>
    <scope>ACTIVE SITE</scope>
    <scope>ACTIVITY REGULATION</scope>
    <scope>BIOTECHNOLOGY</scope>
</reference>
<organism>
    <name type="scientific">Aspergillus niger (strain ATCC MYA-4892 / CBS 513.88 / FGSC A1513)</name>
    <dbReference type="NCBI Taxonomy" id="425011"/>
    <lineage>
        <taxon>Eukaryota</taxon>
        <taxon>Fungi</taxon>
        <taxon>Dikarya</taxon>
        <taxon>Ascomycota</taxon>
        <taxon>Pezizomycotina</taxon>
        <taxon>Eurotiomycetes</taxon>
        <taxon>Eurotiomycetidae</taxon>
        <taxon>Eurotiales</taxon>
        <taxon>Aspergillaceae</taxon>
        <taxon>Aspergillus</taxon>
        <taxon>Aspergillus subgen. Circumdati</taxon>
    </lineage>
</organism>
<comment type="function">
    <text evidence="1 2">Carboxypeptidase that catalyzes the release of a C-terminal amino acid with specific catalytic activity for aromatic amino acids such as phenylalanine (PubMed:24947135, PubMed:33647354). Is able to degrade ochratoxin A, one of the five major mycotoxins most harmful to humans and animals that is produced by Aspergillus and Penicillium species and occurs in a wide range of agricultural products (PubMed:24947135).</text>
</comment>
<comment type="catalytic activity">
    <reaction evidence="1">
        <text>ochratoxin A + H2O = ochratoxin alpha + L-phenylalanine</text>
        <dbReference type="Rhea" id="RHEA:72751"/>
        <dbReference type="ChEBI" id="CHEBI:15377"/>
        <dbReference type="ChEBI" id="CHEBI:58095"/>
        <dbReference type="ChEBI" id="CHEBI:166829"/>
        <dbReference type="ChEBI" id="CHEBI:192527"/>
    </reaction>
    <physiologicalReaction direction="left-to-right" evidence="1">
        <dbReference type="Rhea" id="RHEA:72752"/>
    </physiologicalReaction>
</comment>
<comment type="cofactor">
    <cofactor evidence="1">
        <name>Zn(2+)</name>
        <dbReference type="ChEBI" id="CHEBI:29105"/>
    </cofactor>
</comment>
<comment type="activity regulation">
    <text evidence="1">The Zn(2+)-specific chelator 1,10-phenanthroline inhibits the enzyme activity.</text>
</comment>
<comment type="biophysicochemical properties">
    <phDependence>
        <text evidence="1">Optimum pH is 6.</text>
    </phDependence>
    <temperatureDependence>
        <text evidence="1">Optimum temperature is 66 degrees Celsius.</text>
    </temperatureDependence>
</comment>
<comment type="subunit">
    <text evidence="1">Homooctamer.</text>
</comment>
<comment type="subcellular location">
    <subcellularLocation>
        <location evidence="1">Secreted</location>
    </subcellularLocation>
</comment>
<comment type="domain">
    <text evidence="1">Each subunit of the homooctameric enzyme folds into a two-domain structure characteristic of a metal dependent amidohydrolase, with a twisted TIM (triosephosphateisomerase)-barrel and a smaller beta-sandwich domain.</text>
</comment>
<comment type="biotechnology">
    <text evidence="1 2">Detoxification of contaminated food is a challenging health issue and ochratoxinase is a promising enzyme that hydrolyzes ochrtoxin A, a mycotoxin demonstrated to have nephrotoxic, immunotoxic, genotoxic, neurotoxic, and teratogenic properties; and that occurs in a wide range of agricultural products (PubMed:24947135). Its carboxypeptidase activity also allows to produce high Fischer ratio (the ratio of moles of branched chain amino acid content to aromatic amino acid content) oligopeptides, a kind of functional oligopeptides that protect the liver, treat phenylketonuria, have anti-fatigue properties, exhibits antioxidant properties, and support anticoagulation of the blood (PubMed:33647354). Producing high Fischer ratio oligopeptides using an enzymatic method is therefore of great health significance and economic benefit (PubMed:33647354).</text>
</comment>
<comment type="similarity">
    <text evidence="5">Belongs to the metallo-dependent hydrolases superfamily. Ochratoxinase amidase 2 family.</text>
</comment>
<comment type="online information" name="Protein Spotlight">
    <link uri="https://www.proteinspotlight.org/back_issues/243/"/>
    <text>Small poison - Issue 243 of January 2022</text>
</comment>
<evidence type="ECO:0000269" key="1">
    <source>
    </source>
</evidence>
<evidence type="ECO:0000269" key="2">
    <source>
    </source>
</evidence>
<evidence type="ECO:0000303" key="3">
    <source>
    </source>
</evidence>
<evidence type="ECO:0000303" key="4">
    <source>
    </source>
</evidence>
<evidence type="ECO:0000305" key="5"/>
<evidence type="ECO:0007744" key="6">
    <source>
        <dbReference type="PDB" id="4C5Y"/>
    </source>
</evidence>
<evidence type="ECO:0007829" key="7">
    <source>
        <dbReference type="PDB" id="4C60"/>
    </source>
</evidence>
<evidence type="ECO:0007829" key="8">
    <source>
        <dbReference type="PDB" id="4C65"/>
    </source>
</evidence>
<keyword id="KW-0002">3D-structure</keyword>
<keyword id="KW-0121">Carboxypeptidase</keyword>
<keyword id="KW-0378">Hydrolase</keyword>
<keyword id="KW-0479">Metal-binding</keyword>
<keyword id="KW-0482">Metalloprotease</keyword>
<keyword id="KW-0645">Protease</keyword>
<keyword id="KW-1185">Reference proteome</keyword>
<keyword id="KW-0964">Secreted</keyword>
<keyword id="KW-0862">Zinc</keyword>
<sequence length="480" mass="51200">MVRRIASATPMVQSPMSPLGTTYCVRPNPVSLNLQRRPLVIASTDEAKVTIIYAGLLIPGDGEPLRNAALVISDKIIAFVGSEADIPKKYLRSTQSTHRVPVLMPGLWDCHMHFGGDDDYYNDYTSGLATHPASSGARLARGCWEALQNGYTSYRDLAGYGCEVAKAINDGTIVGPNVYSSGAALSQTAGHGDIFALPAGEVLGSYGVMNPRPGYWGAGPLCIADGVEEVRRAVRLQIRRGAKVIKVMASGGVMSRDDNPNFAQFSPEELKVIVEEAARQNRIVSAHVHGKAGIMAAIKAGCKSLEHVSYADEEVWELMKEKGILYVATRSVIEIFLASNGEGLVKESWAKLQALADSHLKAYQGAIKAGVTIALGTDTAPGGPTALELQFAVERGGMTPLEAIKAATANAPLSVGPQAPLTGQLREGYEADVIALEENPLEDIKVFQEPKAVTHVWKGGKLFKGPGIGPWGEDARNPFL</sequence>
<protein>
    <recommendedName>
        <fullName evidence="3">Ochratoxinase</fullName>
        <shortName evidence="3">OTase</shortName>
        <ecNumber evidence="1">3.4.17.-</ecNumber>
    </recommendedName>
    <alternativeName>
        <fullName evidence="3">Amidohydrolase 2</fullName>
        <shortName evidence="3">Amidase 2</shortName>
    </alternativeName>
    <alternativeName>
        <fullName evidence="4">Carboxypeptidase Am2</fullName>
    </alternativeName>
</protein>
<name>OTASE_ASPNC</name>
<accession>A2R2V4</accession>
<gene>
    <name evidence="3" type="primary">Am2</name>
    <name type="ORF">An14g02080</name>
</gene>
<feature type="chain" id="PRO_0000453663" description="Ochratoxinase">
    <location>
        <begin position="1"/>
        <end position="480"/>
    </location>
</feature>
<feature type="active site" evidence="1">
    <location>
        <position position="246"/>
    </location>
</feature>
<feature type="active site" evidence="1">
    <location>
        <position position="378"/>
    </location>
</feature>
<feature type="binding site" evidence="1 6">
    <location>
        <position position="111"/>
    </location>
    <ligand>
        <name>Zn(2+)</name>
        <dbReference type="ChEBI" id="CHEBI:29105"/>
        <label>1</label>
    </ligand>
</feature>
<feature type="binding site" evidence="1 6">
    <location>
        <position position="113"/>
    </location>
    <ligand>
        <name>Zn(2+)</name>
        <dbReference type="ChEBI" id="CHEBI:29105"/>
        <label>1</label>
    </ligand>
</feature>
<feature type="binding site" evidence="1 6">
    <location>
        <position position="246"/>
    </location>
    <ligand>
        <name>Zn(2+)</name>
        <dbReference type="ChEBI" id="CHEBI:29105"/>
        <label>1</label>
    </ligand>
</feature>
<feature type="binding site" evidence="1 6">
    <location>
        <position position="246"/>
    </location>
    <ligand>
        <name>Zn(2+)</name>
        <dbReference type="ChEBI" id="CHEBI:29105"/>
        <label>2</label>
    </ligand>
</feature>
<feature type="binding site" evidence="1 6">
    <location>
        <position position="287"/>
    </location>
    <ligand>
        <name>Zn(2+)</name>
        <dbReference type="ChEBI" id="CHEBI:29105"/>
        <label>2</label>
    </ligand>
</feature>
<feature type="binding site" evidence="1 6">
    <location>
        <position position="307"/>
    </location>
    <ligand>
        <name>Zn(2+)</name>
        <dbReference type="ChEBI" id="CHEBI:29105"/>
        <label>2</label>
    </ligand>
</feature>
<feature type="mutagenesis site" description="Affect substrate binding and carboxypeptidase activity." evidence="2">
    <original>S</original>
    <variation>G</variation>
    <variation>W</variation>
    <location>
        <position position="135"/>
    </location>
</feature>
<feature type="mutagenesis site" description="Affect substrate binding and carboxypeptidase activity." evidence="2">
    <original>Y</original>
    <variation>S</variation>
    <variation>G</variation>
    <location>
        <position position="160"/>
    </location>
</feature>
<feature type="mutagenesis site" description="Affect substrate binding and carboxypeptidase activity." evidence="2">
    <original>Y</original>
    <variation>S</variation>
    <variation>G</variation>
    <location>
        <position position="206"/>
    </location>
</feature>
<feature type="strand" evidence="8">
    <location>
        <begin position="49"/>
        <end position="57"/>
    </location>
</feature>
<feature type="strand" evidence="8">
    <location>
        <begin position="60"/>
        <end position="62"/>
    </location>
</feature>
<feature type="strand" evidence="8">
    <location>
        <begin position="65"/>
        <end position="73"/>
    </location>
</feature>
<feature type="strand" evidence="8">
    <location>
        <begin position="76"/>
        <end position="82"/>
    </location>
</feature>
<feature type="helix" evidence="8">
    <location>
        <begin position="83"/>
        <end position="85"/>
    </location>
</feature>
<feature type="helix" evidence="8">
    <location>
        <begin position="88"/>
        <end position="93"/>
    </location>
</feature>
<feature type="strand" evidence="8">
    <location>
        <begin position="95"/>
        <end position="105"/>
    </location>
</feature>
<feature type="strand" evidence="8">
    <location>
        <begin position="107"/>
        <end position="112"/>
    </location>
</feature>
<feature type="helix" evidence="8">
    <location>
        <begin position="125"/>
        <end position="129"/>
    </location>
</feature>
<feature type="helix" evidence="8">
    <location>
        <begin position="132"/>
        <end position="148"/>
    </location>
</feature>
<feature type="strand" evidence="8">
    <location>
        <begin position="151"/>
        <end position="156"/>
    </location>
</feature>
<feature type="strand" evidence="8">
    <location>
        <begin position="158"/>
        <end position="160"/>
    </location>
</feature>
<feature type="helix" evidence="8">
    <location>
        <begin position="161"/>
        <end position="169"/>
    </location>
</feature>
<feature type="strand" evidence="8">
    <location>
        <begin position="177"/>
        <end position="180"/>
    </location>
</feature>
<feature type="strand" evidence="8">
    <location>
        <begin position="182"/>
        <end position="186"/>
    </location>
</feature>
<feature type="helix" evidence="8">
    <location>
        <begin position="199"/>
        <end position="206"/>
    </location>
</feature>
<feature type="strand" evidence="8">
    <location>
        <begin position="207"/>
        <end position="210"/>
    </location>
</feature>
<feature type="turn" evidence="8">
    <location>
        <begin position="213"/>
        <end position="217"/>
    </location>
</feature>
<feature type="strand" evidence="8">
    <location>
        <begin position="219"/>
        <end position="223"/>
    </location>
</feature>
<feature type="helix" evidence="8">
    <location>
        <begin position="227"/>
        <end position="239"/>
    </location>
</feature>
<feature type="strand" evidence="8">
    <location>
        <begin position="243"/>
        <end position="248"/>
    </location>
</feature>
<feature type="strand" evidence="8">
    <location>
        <begin position="256"/>
        <end position="258"/>
    </location>
</feature>
<feature type="helix" evidence="8">
    <location>
        <begin position="267"/>
        <end position="279"/>
    </location>
</feature>
<feature type="strand" evidence="8">
    <location>
        <begin position="284"/>
        <end position="288"/>
    </location>
</feature>
<feature type="helix" evidence="8">
    <location>
        <begin position="291"/>
        <end position="300"/>
    </location>
</feature>
<feature type="strand" evidence="8">
    <location>
        <begin position="304"/>
        <end position="307"/>
    </location>
</feature>
<feature type="helix" evidence="8">
    <location>
        <begin position="313"/>
        <end position="322"/>
    </location>
</feature>
<feature type="strand" evidence="8">
    <location>
        <begin position="325"/>
        <end position="327"/>
    </location>
</feature>
<feature type="helix" evidence="8">
    <location>
        <begin position="330"/>
        <end position="339"/>
    </location>
</feature>
<feature type="turn" evidence="7">
    <location>
        <begin position="340"/>
        <end position="343"/>
    </location>
</feature>
<feature type="helix" evidence="8">
    <location>
        <begin position="346"/>
        <end position="369"/>
    </location>
</feature>
<feature type="helix" evidence="8">
    <location>
        <begin position="386"/>
        <end position="394"/>
    </location>
</feature>
<feature type="helix" evidence="8">
    <location>
        <begin position="400"/>
        <end position="407"/>
    </location>
</feature>
<feature type="helix" evidence="8">
    <location>
        <begin position="411"/>
        <end position="418"/>
    </location>
</feature>
<feature type="strand" evidence="8">
    <location>
        <begin position="433"/>
        <end position="438"/>
    </location>
</feature>
<feature type="turn" evidence="8">
    <location>
        <begin position="440"/>
        <end position="442"/>
    </location>
</feature>
<feature type="helix" evidence="8">
    <location>
        <begin position="444"/>
        <end position="448"/>
    </location>
</feature>
<feature type="helix" evidence="8">
    <location>
        <begin position="450"/>
        <end position="452"/>
    </location>
</feature>
<feature type="strand" evidence="8">
    <location>
        <begin position="453"/>
        <end position="458"/>
    </location>
</feature>
<feature type="strand" evidence="8">
    <location>
        <begin position="461"/>
        <end position="465"/>
    </location>
</feature>